<comment type="function">
    <text evidence="1">Necessary for normal cell division and for the maintenance of normal septation.</text>
</comment>
<comment type="cofactor">
    <cofactor evidence="1">
        <name>Mg(2+)</name>
        <dbReference type="ChEBI" id="CHEBI:18420"/>
    </cofactor>
</comment>
<comment type="similarity">
    <text evidence="1">Belongs to the TRAFAC class TrmE-Era-EngA-EngB-Septin-like GTPase superfamily. EngB GTPase family.</text>
</comment>
<proteinExistence type="inferred from homology"/>
<gene>
    <name evidence="1" type="primary">engB</name>
    <name type="ordered locus">LEUM_1520</name>
</gene>
<reference key="1">
    <citation type="journal article" date="2006" name="Proc. Natl. Acad. Sci. U.S.A.">
        <title>Comparative genomics of the lactic acid bacteria.</title>
        <authorList>
            <person name="Makarova K.S."/>
            <person name="Slesarev A."/>
            <person name="Wolf Y.I."/>
            <person name="Sorokin A."/>
            <person name="Mirkin B."/>
            <person name="Koonin E.V."/>
            <person name="Pavlov A."/>
            <person name="Pavlova N."/>
            <person name="Karamychev V."/>
            <person name="Polouchine N."/>
            <person name="Shakhova V."/>
            <person name="Grigoriev I."/>
            <person name="Lou Y."/>
            <person name="Rohksar D."/>
            <person name="Lucas S."/>
            <person name="Huang K."/>
            <person name="Goodstein D.M."/>
            <person name="Hawkins T."/>
            <person name="Plengvidhya V."/>
            <person name="Welker D."/>
            <person name="Hughes J."/>
            <person name="Goh Y."/>
            <person name="Benson A."/>
            <person name="Baldwin K."/>
            <person name="Lee J.-H."/>
            <person name="Diaz-Muniz I."/>
            <person name="Dosti B."/>
            <person name="Smeianov V."/>
            <person name="Wechter W."/>
            <person name="Barabote R."/>
            <person name="Lorca G."/>
            <person name="Altermann E."/>
            <person name="Barrangou R."/>
            <person name="Ganesan B."/>
            <person name="Xie Y."/>
            <person name="Rawsthorne H."/>
            <person name="Tamir D."/>
            <person name="Parker C."/>
            <person name="Breidt F."/>
            <person name="Broadbent J.R."/>
            <person name="Hutkins R."/>
            <person name="O'Sullivan D."/>
            <person name="Steele J."/>
            <person name="Unlu G."/>
            <person name="Saier M.H. Jr."/>
            <person name="Klaenhammer T."/>
            <person name="Richardson P."/>
            <person name="Kozyavkin S."/>
            <person name="Weimer B.C."/>
            <person name="Mills D.A."/>
        </authorList>
    </citation>
    <scope>NUCLEOTIDE SEQUENCE [LARGE SCALE GENOMIC DNA]</scope>
    <source>
        <strain>ATCC 8293 / DSM 20343 / BCRC 11652 / CCM 1803 / JCM 6124 / NCDO 523 / NBRC 100496 / NCIMB 8023 / NCTC 12954 / NRRL B-1118 / 37Y</strain>
    </source>
</reference>
<evidence type="ECO:0000255" key="1">
    <source>
        <dbReference type="HAMAP-Rule" id="MF_00321"/>
    </source>
</evidence>
<dbReference type="EMBL" id="CP000414">
    <property type="protein sequence ID" value="ABJ62612.1"/>
    <property type="molecule type" value="Genomic_DNA"/>
</dbReference>
<dbReference type="SMR" id="Q03W10"/>
<dbReference type="EnsemblBacteria" id="ABJ62612">
    <property type="protein sequence ID" value="ABJ62612"/>
    <property type="gene ID" value="LEUM_1520"/>
</dbReference>
<dbReference type="GeneID" id="29576851"/>
<dbReference type="KEGG" id="lme:LEUM_1520"/>
<dbReference type="eggNOG" id="COG0218">
    <property type="taxonomic scope" value="Bacteria"/>
</dbReference>
<dbReference type="HOGENOM" id="CLU_033732_3_0_9"/>
<dbReference type="Proteomes" id="UP000000362">
    <property type="component" value="Chromosome"/>
</dbReference>
<dbReference type="GO" id="GO:0005829">
    <property type="term" value="C:cytosol"/>
    <property type="evidence" value="ECO:0007669"/>
    <property type="project" value="TreeGrafter"/>
</dbReference>
<dbReference type="GO" id="GO:0005525">
    <property type="term" value="F:GTP binding"/>
    <property type="evidence" value="ECO:0007669"/>
    <property type="project" value="UniProtKB-UniRule"/>
</dbReference>
<dbReference type="GO" id="GO:0046872">
    <property type="term" value="F:metal ion binding"/>
    <property type="evidence" value="ECO:0007669"/>
    <property type="project" value="UniProtKB-KW"/>
</dbReference>
<dbReference type="GO" id="GO:0000917">
    <property type="term" value="P:division septum assembly"/>
    <property type="evidence" value="ECO:0007669"/>
    <property type="project" value="UniProtKB-KW"/>
</dbReference>
<dbReference type="CDD" id="cd01876">
    <property type="entry name" value="YihA_EngB"/>
    <property type="match status" value="1"/>
</dbReference>
<dbReference type="FunFam" id="3.40.50.300:FF:000098">
    <property type="entry name" value="Probable GTP-binding protein EngB"/>
    <property type="match status" value="1"/>
</dbReference>
<dbReference type="Gene3D" id="3.40.50.300">
    <property type="entry name" value="P-loop containing nucleotide triphosphate hydrolases"/>
    <property type="match status" value="1"/>
</dbReference>
<dbReference type="HAMAP" id="MF_00321">
    <property type="entry name" value="GTPase_EngB"/>
    <property type="match status" value="1"/>
</dbReference>
<dbReference type="InterPro" id="IPR030393">
    <property type="entry name" value="G_ENGB_dom"/>
</dbReference>
<dbReference type="InterPro" id="IPR006073">
    <property type="entry name" value="GTP-bd"/>
</dbReference>
<dbReference type="InterPro" id="IPR019987">
    <property type="entry name" value="GTP-bd_ribosome_bio_YsxC"/>
</dbReference>
<dbReference type="InterPro" id="IPR027417">
    <property type="entry name" value="P-loop_NTPase"/>
</dbReference>
<dbReference type="InterPro" id="IPR005225">
    <property type="entry name" value="Small_GTP-bd"/>
</dbReference>
<dbReference type="NCBIfam" id="TIGR03598">
    <property type="entry name" value="GTPase_YsxC"/>
    <property type="match status" value="1"/>
</dbReference>
<dbReference type="NCBIfam" id="TIGR00231">
    <property type="entry name" value="small_GTP"/>
    <property type="match status" value="1"/>
</dbReference>
<dbReference type="PANTHER" id="PTHR11649:SF13">
    <property type="entry name" value="ENGB-TYPE G DOMAIN-CONTAINING PROTEIN"/>
    <property type="match status" value="1"/>
</dbReference>
<dbReference type="PANTHER" id="PTHR11649">
    <property type="entry name" value="MSS1/TRME-RELATED GTP-BINDING PROTEIN"/>
    <property type="match status" value="1"/>
</dbReference>
<dbReference type="Pfam" id="PF01926">
    <property type="entry name" value="MMR_HSR1"/>
    <property type="match status" value="1"/>
</dbReference>
<dbReference type="SUPFAM" id="SSF52540">
    <property type="entry name" value="P-loop containing nucleoside triphosphate hydrolases"/>
    <property type="match status" value="1"/>
</dbReference>
<dbReference type="PROSITE" id="PS51706">
    <property type="entry name" value="G_ENGB"/>
    <property type="match status" value="1"/>
</dbReference>
<accession>Q03W10</accession>
<keyword id="KW-0131">Cell cycle</keyword>
<keyword id="KW-0132">Cell division</keyword>
<keyword id="KW-0342">GTP-binding</keyword>
<keyword id="KW-0460">Magnesium</keyword>
<keyword id="KW-0479">Metal-binding</keyword>
<keyword id="KW-0547">Nucleotide-binding</keyword>
<keyword id="KW-1185">Reference proteome</keyword>
<keyword id="KW-0717">Septation</keyword>
<organism>
    <name type="scientific">Leuconostoc mesenteroides subsp. mesenteroides (strain ATCC 8293 / DSM 20343 / BCRC 11652 / CCM 1803 / JCM 6124 / NCDO 523 / NBRC 100496 / NCIMB 8023 / NCTC 12954 / NRRL B-1118 / 37Y)</name>
    <dbReference type="NCBI Taxonomy" id="203120"/>
    <lineage>
        <taxon>Bacteria</taxon>
        <taxon>Bacillati</taxon>
        <taxon>Bacillota</taxon>
        <taxon>Bacilli</taxon>
        <taxon>Lactobacillales</taxon>
        <taxon>Lactobacillaceae</taxon>
        <taxon>Leuconostoc</taxon>
    </lineage>
</organism>
<feature type="chain" id="PRO_1000005830" description="Probable GTP-binding protein EngB">
    <location>
        <begin position="1"/>
        <end position="194"/>
    </location>
</feature>
<feature type="domain" description="EngB-type G" evidence="1">
    <location>
        <begin position="22"/>
        <end position="194"/>
    </location>
</feature>
<feature type="binding site" evidence="1">
    <location>
        <begin position="30"/>
        <end position="37"/>
    </location>
    <ligand>
        <name>GTP</name>
        <dbReference type="ChEBI" id="CHEBI:37565"/>
    </ligand>
</feature>
<feature type="binding site" evidence="1">
    <location>
        <position position="37"/>
    </location>
    <ligand>
        <name>Mg(2+)</name>
        <dbReference type="ChEBI" id="CHEBI:18420"/>
    </ligand>
</feature>
<feature type="binding site" evidence="1">
    <location>
        <begin position="57"/>
        <end position="61"/>
    </location>
    <ligand>
        <name>GTP</name>
        <dbReference type="ChEBI" id="CHEBI:37565"/>
    </ligand>
</feature>
<feature type="binding site" evidence="1">
    <location>
        <position position="59"/>
    </location>
    <ligand>
        <name>Mg(2+)</name>
        <dbReference type="ChEBI" id="CHEBI:18420"/>
    </ligand>
</feature>
<feature type="binding site" evidence="1">
    <location>
        <begin position="75"/>
        <end position="78"/>
    </location>
    <ligand>
        <name>GTP</name>
        <dbReference type="ChEBI" id="CHEBI:37565"/>
    </ligand>
</feature>
<feature type="binding site" evidence="1">
    <location>
        <begin position="142"/>
        <end position="145"/>
    </location>
    <ligand>
        <name>GTP</name>
        <dbReference type="ChEBI" id="CHEBI:37565"/>
    </ligand>
</feature>
<feature type="binding site" evidence="1">
    <location>
        <begin position="175"/>
        <end position="177"/>
    </location>
    <ligand>
        <name>GTP</name>
        <dbReference type="ChEBI" id="CHEBI:37565"/>
    </ligand>
</feature>
<name>ENGB_LEUMM</name>
<protein>
    <recommendedName>
        <fullName evidence="1">Probable GTP-binding protein EngB</fullName>
    </recommendedName>
</protein>
<sequence length="194" mass="22148">MDVHNVEMVMSAVSASQYPTDGKPEIALVGRSNVGKSSLTNTLIQRKNFARTSSQPGKTQTLNFYDVEDKLYFVDVPGYGYAKVSKAQREAFGVMIEEYITSRKQLRGVISLVDARHEPSEDDISMYEWLHYYNIPILVVATKSDKISRGKFNKAESVIKKALGFDNEDSDFQFFSSETKYGKDEVWHWIEQHI</sequence>